<proteinExistence type="inferred from homology"/>
<accession>P44325</accession>
<dbReference type="EC" id="3.5.4.5" evidence="1"/>
<dbReference type="EMBL" id="L42023">
    <property type="protein sequence ID" value="AAC22997.1"/>
    <property type="molecule type" value="Genomic_DNA"/>
</dbReference>
<dbReference type="PIR" id="D64118">
    <property type="entry name" value="D64118"/>
</dbReference>
<dbReference type="RefSeq" id="NP_439501.1">
    <property type="nucleotide sequence ID" value="NC_000907.1"/>
</dbReference>
<dbReference type="SMR" id="P44325"/>
<dbReference type="STRING" id="71421.HI_1350"/>
<dbReference type="EnsemblBacteria" id="AAC22997">
    <property type="protein sequence ID" value="AAC22997"/>
    <property type="gene ID" value="HI_1350"/>
</dbReference>
<dbReference type="KEGG" id="hin:HI_1350"/>
<dbReference type="PATRIC" id="fig|71421.8.peg.1403"/>
<dbReference type="eggNOG" id="COG0295">
    <property type="taxonomic scope" value="Bacteria"/>
</dbReference>
<dbReference type="HOGENOM" id="CLU_052424_0_0_6"/>
<dbReference type="OrthoDB" id="9795347at2"/>
<dbReference type="PhylomeDB" id="P44325"/>
<dbReference type="BioCyc" id="HINF71421:G1GJ1-1375-MONOMER"/>
<dbReference type="Proteomes" id="UP000000579">
    <property type="component" value="Chromosome"/>
</dbReference>
<dbReference type="GO" id="GO:0005829">
    <property type="term" value="C:cytosol"/>
    <property type="evidence" value="ECO:0000318"/>
    <property type="project" value="GO_Central"/>
</dbReference>
<dbReference type="GO" id="GO:0004126">
    <property type="term" value="F:cytidine deaminase activity"/>
    <property type="evidence" value="ECO:0000318"/>
    <property type="project" value="GO_Central"/>
</dbReference>
<dbReference type="GO" id="GO:0042802">
    <property type="term" value="F:identical protein binding"/>
    <property type="evidence" value="ECO:0007669"/>
    <property type="project" value="UniProtKB-ARBA"/>
</dbReference>
<dbReference type="GO" id="GO:0008270">
    <property type="term" value="F:zinc ion binding"/>
    <property type="evidence" value="ECO:0000318"/>
    <property type="project" value="GO_Central"/>
</dbReference>
<dbReference type="GO" id="GO:0009972">
    <property type="term" value="P:cytidine deamination"/>
    <property type="evidence" value="ECO:0000318"/>
    <property type="project" value="GO_Central"/>
</dbReference>
<dbReference type="CDD" id="cd01283">
    <property type="entry name" value="cytidine_deaminase"/>
    <property type="match status" value="2"/>
</dbReference>
<dbReference type="FunFam" id="3.40.140.10:FF:000007">
    <property type="entry name" value="Cytidine deaminase"/>
    <property type="match status" value="1"/>
</dbReference>
<dbReference type="Gene3D" id="3.40.140.10">
    <property type="entry name" value="Cytidine Deaminase, domain 2"/>
    <property type="match status" value="2"/>
</dbReference>
<dbReference type="HAMAP" id="MF_01558">
    <property type="entry name" value="Cyt_deam"/>
    <property type="match status" value="1"/>
</dbReference>
<dbReference type="InterPro" id="IPR016192">
    <property type="entry name" value="APOBEC/CMP_deaminase_Zn-bd"/>
</dbReference>
<dbReference type="InterPro" id="IPR002125">
    <property type="entry name" value="CMP_dCMP_dom"/>
</dbReference>
<dbReference type="InterPro" id="IPR013171">
    <property type="entry name" value="Cyd/dCyd_deaminase_Zn-bd"/>
</dbReference>
<dbReference type="InterPro" id="IPR050202">
    <property type="entry name" value="Cyt/Deoxycyt_deaminase"/>
</dbReference>
<dbReference type="InterPro" id="IPR006263">
    <property type="entry name" value="Cyt_deam_dimer"/>
</dbReference>
<dbReference type="InterPro" id="IPR016193">
    <property type="entry name" value="Cytidine_deaminase-like"/>
</dbReference>
<dbReference type="InterPro" id="IPR020797">
    <property type="entry name" value="Cytidine_deaminase_bacteria"/>
</dbReference>
<dbReference type="NCBIfam" id="TIGR01355">
    <property type="entry name" value="cyt_deam_dimer"/>
    <property type="match status" value="1"/>
</dbReference>
<dbReference type="NCBIfam" id="NF006537">
    <property type="entry name" value="PRK09027.1"/>
    <property type="match status" value="1"/>
</dbReference>
<dbReference type="PANTHER" id="PTHR11644">
    <property type="entry name" value="CYTIDINE DEAMINASE"/>
    <property type="match status" value="1"/>
</dbReference>
<dbReference type="PANTHER" id="PTHR11644:SF2">
    <property type="entry name" value="CYTIDINE DEAMINASE"/>
    <property type="match status" value="1"/>
</dbReference>
<dbReference type="Pfam" id="PF00383">
    <property type="entry name" value="dCMP_cyt_deam_1"/>
    <property type="match status" value="1"/>
</dbReference>
<dbReference type="Pfam" id="PF08211">
    <property type="entry name" value="dCMP_cyt_deam_2"/>
    <property type="match status" value="1"/>
</dbReference>
<dbReference type="PIRSF" id="PIRSF006334">
    <property type="entry name" value="Cdd_plus_pseudo"/>
    <property type="match status" value="1"/>
</dbReference>
<dbReference type="SUPFAM" id="SSF53927">
    <property type="entry name" value="Cytidine deaminase-like"/>
    <property type="match status" value="2"/>
</dbReference>
<dbReference type="PROSITE" id="PS00903">
    <property type="entry name" value="CYT_DCMP_DEAMINASES_1"/>
    <property type="match status" value="1"/>
</dbReference>
<dbReference type="PROSITE" id="PS51747">
    <property type="entry name" value="CYT_DCMP_DEAMINASES_2"/>
    <property type="match status" value="2"/>
</dbReference>
<name>CDD_HAEIN</name>
<keyword id="KW-0378">Hydrolase</keyword>
<keyword id="KW-0479">Metal-binding</keyword>
<keyword id="KW-1185">Reference proteome</keyword>
<keyword id="KW-0862">Zinc</keyword>
<organism>
    <name type="scientific">Haemophilus influenzae (strain ATCC 51907 / DSM 11121 / KW20 / Rd)</name>
    <dbReference type="NCBI Taxonomy" id="71421"/>
    <lineage>
        <taxon>Bacteria</taxon>
        <taxon>Pseudomonadati</taxon>
        <taxon>Pseudomonadota</taxon>
        <taxon>Gammaproteobacteria</taxon>
        <taxon>Pasteurellales</taxon>
        <taxon>Pasteurellaceae</taxon>
        <taxon>Haemophilus</taxon>
    </lineage>
</organism>
<evidence type="ECO:0000255" key="1">
    <source>
        <dbReference type="HAMAP-Rule" id="MF_01558"/>
    </source>
</evidence>
<evidence type="ECO:0000255" key="2">
    <source>
        <dbReference type="PROSITE-ProRule" id="PRU01083"/>
    </source>
</evidence>
<sequence length="292" mass="32571">MQDLIKRTLPQDDALNQAIVNDLRSQNWAGFLNYSQVQQLCHNFELTTLKLAMHLLPLAASYSHTAISHFNVGAIAIGEQGDFYFGANQEFANSAIQQTIHAEQSAISHAWLRNERRISDMVVNYTPCGHCRQFMNELHGAEKISIHLPHSQNNPLHSYLPDAFGPKDLDIAAHLLAEENHDLVADHQDDLVNQAILAANQSHCPYSNSPHGIAILFKNSDVVTGRYAENAAFNPSLPALQTALNFAYLNDKKLSDIERIVMAEKALKLSHKTMAETLLSTLTSVELEYYSL</sequence>
<feature type="chain" id="PRO_0000171653" description="Cytidine deaminase">
    <location>
        <begin position="1"/>
        <end position="292"/>
    </location>
</feature>
<feature type="domain" description="CMP/dCMP-type deaminase 1" evidence="2">
    <location>
        <begin position="47"/>
        <end position="167"/>
    </location>
</feature>
<feature type="domain" description="CMP/dCMP-type deaminase 2" evidence="2">
    <location>
        <begin position="186"/>
        <end position="292"/>
    </location>
</feature>
<feature type="active site" description="Proton donor" evidence="1">
    <location>
        <position position="103"/>
    </location>
</feature>
<feature type="binding site" evidence="1">
    <location>
        <begin position="88"/>
        <end position="90"/>
    </location>
    <ligand>
        <name>substrate</name>
    </ligand>
</feature>
<feature type="binding site" evidence="1">
    <location>
        <position position="101"/>
    </location>
    <ligand>
        <name>Zn(2+)</name>
        <dbReference type="ChEBI" id="CHEBI:29105"/>
        <note>catalytic</note>
    </ligand>
</feature>
<feature type="binding site" evidence="1">
    <location>
        <position position="128"/>
    </location>
    <ligand>
        <name>Zn(2+)</name>
        <dbReference type="ChEBI" id="CHEBI:29105"/>
        <note>catalytic</note>
    </ligand>
</feature>
<feature type="binding site" evidence="1">
    <location>
        <position position="131"/>
    </location>
    <ligand>
        <name>Zn(2+)</name>
        <dbReference type="ChEBI" id="CHEBI:29105"/>
        <note>catalytic</note>
    </ligand>
</feature>
<comment type="function">
    <text evidence="1">This enzyme scavenges exogenous and endogenous cytidine and 2'-deoxycytidine for UMP synthesis.</text>
</comment>
<comment type="catalytic activity">
    <reaction evidence="1">
        <text>cytidine + H2O + H(+) = uridine + NH4(+)</text>
        <dbReference type="Rhea" id="RHEA:16069"/>
        <dbReference type="ChEBI" id="CHEBI:15377"/>
        <dbReference type="ChEBI" id="CHEBI:15378"/>
        <dbReference type="ChEBI" id="CHEBI:16704"/>
        <dbReference type="ChEBI" id="CHEBI:17562"/>
        <dbReference type="ChEBI" id="CHEBI:28938"/>
        <dbReference type="EC" id="3.5.4.5"/>
    </reaction>
</comment>
<comment type="catalytic activity">
    <reaction evidence="1">
        <text>2'-deoxycytidine + H2O + H(+) = 2'-deoxyuridine + NH4(+)</text>
        <dbReference type="Rhea" id="RHEA:13433"/>
        <dbReference type="ChEBI" id="CHEBI:15377"/>
        <dbReference type="ChEBI" id="CHEBI:15378"/>
        <dbReference type="ChEBI" id="CHEBI:15698"/>
        <dbReference type="ChEBI" id="CHEBI:16450"/>
        <dbReference type="ChEBI" id="CHEBI:28938"/>
        <dbReference type="EC" id="3.5.4.5"/>
    </reaction>
</comment>
<comment type="cofactor">
    <cofactor evidence="1">
        <name>Zn(2+)</name>
        <dbReference type="ChEBI" id="CHEBI:29105"/>
    </cofactor>
    <text evidence="1">Binds 1 zinc ion.</text>
</comment>
<comment type="subunit">
    <text evidence="1">Homodimer.</text>
</comment>
<comment type="similarity">
    <text evidence="1">Belongs to the cytidine and deoxycytidylate deaminase family.</text>
</comment>
<protein>
    <recommendedName>
        <fullName evidence="1">Cytidine deaminase</fullName>
        <ecNumber evidence="1">3.5.4.5</ecNumber>
    </recommendedName>
    <alternativeName>
        <fullName evidence="1">Cytidine aminohydrolase</fullName>
        <shortName evidence="1">CDA</shortName>
    </alternativeName>
</protein>
<gene>
    <name evidence="1" type="primary">cdd</name>
    <name type="synonym">cda</name>
    <name type="ordered locus">HI_1350</name>
</gene>
<reference key="1">
    <citation type="journal article" date="1995" name="Science">
        <title>Whole-genome random sequencing and assembly of Haemophilus influenzae Rd.</title>
        <authorList>
            <person name="Fleischmann R.D."/>
            <person name="Adams M.D."/>
            <person name="White O."/>
            <person name="Clayton R.A."/>
            <person name="Kirkness E.F."/>
            <person name="Kerlavage A.R."/>
            <person name="Bult C.J."/>
            <person name="Tomb J.-F."/>
            <person name="Dougherty B.A."/>
            <person name="Merrick J.M."/>
            <person name="McKenney K."/>
            <person name="Sutton G.G."/>
            <person name="FitzHugh W."/>
            <person name="Fields C.A."/>
            <person name="Gocayne J.D."/>
            <person name="Scott J.D."/>
            <person name="Shirley R."/>
            <person name="Liu L.-I."/>
            <person name="Glodek A."/>
            <person name="Kelley J.M."/>
            <person name="Weidman J.F."/>
            <person name="Phillips C.A."/>
            <person name="Spriggs T."/>
            <person name="Hedblom E."/>
            <person name="Cotton M.D."/>
            <person name="Utterback T.R."/>
            <person name="Hanna M.C."/>
            <person name="Nguyen D.T."/>
            <person name="Saudek D.M."/>
            <person name="Brandon R.C."/>
            <person name="Fine L.D."/>
            <person name="Fritchman J.L."/>
            <person name="Fuhrmann J.L."/>
            <person name="Geoghagen N.S.M."/>
            <person name="Gnehm C.L."/>
            <person name="McDonald L.A."/>
            <person name="Small K.V."/>
            <person name="Fraser C.M."/>
            <person name="Smith H.O."/>
            <person name="Venter J.C."/>
        </authorList>
    </citation>
    <scope>NUCLEOTIDE SEQUENCE [LARGE SCALE GENOMIC DNA]</scope>
    <source>
        <strain>ATCC 51907 / DSM 11121 / KW20 / Rd</strain>
    </source>
</reference>